<accession>A4J0J0</accession>
<dbReference type="EMBL" id="CP000612">
    <property type="protein sequence ID" value="ABO48593.1"/>
    <property type="molecule type" value="Genomic_DNA"/>
</dbReference>
<dbReference type="RefSeq" id="WP_011876437.1">
    <property type="nucleotide sequence ID" value="NC_009253.1"/>
</dbReference>
<dbReference type="SMR" id="A4J0J0"/>
<dbReference type="STRING" id="349161.Dred_0043"/>
<dbReference type="KEGG" id="drm:Dred_0043"/>
<dbReference type="eggNOG" id="COG0718">
    <property type="taxonomic scope" value="Bacteria"/>
</dbReference>
<dbReference type="HOGENOM" id="CLU_140930_1_0_9"/>
<dbReference type="OrthoDB" id="9795263at2"/>
<dbReference type="Proteomes" id="UP000001556">
    <property type="component" value="Chromosome"/>
</dbReference>
<dbReference type="GO" id="GO:0043590">
    <property type="term" value="C:bacterial nucleoid"/>
    <property type="evidence" value="ECO:0007669"/>
    <property type="project" value="UniProtKB-UniRule"/>
</dbReference>
<dbReference type="GO" id="GO:0005829">
    <property type="term" value="C:cytosol"/>
    <property type="evidence" value="ECO:0007669"/>
    <property type="project" value="TreeGrafter"/>
</dbReference>
<dbReference type="GO" id="GO:0003677">
    <property type="term" value="F:DNA binding"/>
    <property type="evidence" value="ECO:0007669"/>
    <property type="project" value="UniProtKB-UniRule"/>
</dbReference>
<dbReference type="FunFam" id="3.30.1310.10:FF:000002">
    <property type="entry name" value="Nucleoid-associated protein IKC_06587"/>
    <property type="match status" value="1"/>
</dbReference>
<dbReference type="Gene3D" id="3.30.1310.10">
    <property type="entry name" value="Nucleoid-associated protein YbaB-like domain"/>
    <property type="match status" value="1"/>
</dbReference>
<dbReference type="HAMAP" id="MF_00274">
    <property type="entry name" value="DNA_YbaB_EbfC"/>
    <property type="match status" value="1"/>
</dbReference>
<dbReference type="InterPro" id="IPR036894">
    <property type="entry name" value="YbaB-like_sf"/>
</dbReference>
<dbReference type="InterPro" id="IPR004401">
    <property type="entry name" value="YbaB/EbfC"/>
</dbReference>
<dbReference type="NCBIfam" id="TIGR00103">
    <property type="entry name" value="DNA_YbaB_EbfC"/>
    <property type="match status" value="1"/>
</dbReference>
<dbReference type="PANTHER" id="PTHR33449">
    <property type="entry name" value="NUCLEOID-ASSOCIATED PROTEIN YBAB"/>
    <property type="match status" value="1"/>
</dbReference>
<dbReference type="PANTHER" id="PTHR33449:SF1">
    <property type="entry name" value="NUCLEOID-ASSOCIATED PROTEIN YBAB"/>
    <property type="match status" value="1"/>
</dbReference>
<dbReference type="Pfam" id="PF02575">
    <property type="entry name" value="YbaB_DNA_bd"/>
    <property type="match status" value="1"/>
</dbReference>
<dbReference type="PIRSF" id="PIRSF004555">
    <property type="entry name" value="UCP004555"/>
    <property type="match status" value="1"/>
</dbReference>
<dbReference type="SUPFAM" id="SSF82607">
    <property type="entry name" value="YbaB-like"/>
    <property type="match status" value="1"/>
</dbReference>
<protein>
    <recommendedName>
        <fullName evidence="1">Nucleoid-associated protein Dred_0043</fullName>
    </recommendedName>
</protein>
<gene>
    <name type="ordered locus">Dred_0043</name>
</gene>
<comment type="function">
    <text evidence="1">Binds to DNA and alters its conformation. May be involved in regulation of gene expression, nucleoid organization and DNA protection.</text>
</comment>
<comment type="subunit">
    <text evidence="1">Homodimer.</text>
</comment>
<comment type="subcellular location">
    <subcellularLocation>
        <location evidence="1">Cytoplasm</location>
        <location evidence="1">Nucleoid</location>
    </subcellularLocation>
</comment>
<comment type="similarity">
    <text evidence="1">Belongs to the YbaB/EbfC family.</text>
</comment>
<organism>
    <name type="scientific">Desulforamulus reducens (strain ATCC BAA-1160 / DSM 100696 / MI-1)</name>
    <name type="common">Desulfotomaculum reducens</name>
    <dbReference type="NCBI Taxonomy" id="349161"/>
    <lineage>
        <taxon>Bacteria</taxon>
        <taxon>Bacillati</taxon>
        <taxon>Bacillota</taxon>
        <taxon>Clostridia</taxon>
        <taxon>Eubacteriales</taxon>
        <taxon>Peptococcaceae</taxon>
        <taxon>Desulforamulus</taxon>
    </lineage>
</organism>
<feature type="chain" id="PRO_1000078756" description="Nucleoid-associated protein Dred_0043">
    <location>
        <begin position="1"/>
        <end position="105"/>
    </location>
</feature>
<sequence length="105" mass="11381">MMGGNMNKMMKQVQKMQQDMAKMQEELGNRTVETTAGGGVVKVVASGKQEIISITIKPEAVDPDDVEMLQDLLITAVNDALRQSQEMVAKEMGKLTGGLNIPGLF</sequence>
<evidence type="ECO:0000255" key="1">
    <source>
        <dbReference type="HAMAP-Rule" id="MF_00274"/>
    </source>
</evidence>
<reference key="1">
    <citation type="submission" date="2007-03" db="EMBL/GenBank/DDBJ databases">
        <title>Complete sequence of Desulfotomaculum reducens MI-1.</title>
        <authorList>
            <consortium name="US DOE Joint Genome Institute"/>
            <person name="Copeland A."/>
            <person name="Lucas S."/>
            <person name="Lapidus A."/>
            <person name="Barry K."/>
            <person name="Detter J.C."/>
            <person name="Glavina del Rio T."/>
            <person name="Hammon N."/>
            <person name="Israni S."/>
            <person name="Dalin E."/>
            <person name="Tice H."/>
            <person name="Pitluck S."/>
            <person name="Sims D."/>
            <person name="Brettin T."/>
            <person name="Bruce D."/>
            <person name="Han C."/>
            <person name="Tapia R."/>
            <person name="Schmutz J."/>
            <person name="Larimer F."/>
            <person name="Land M."/>
            <person name="Hauser L."/>
            <person name="Kyrpides N."/>
            <person name="Kim E."/>
            <person name="Tebo B.M."/>
            <person name="Richardson P."/>
        </authorList>
    </citation>
    <scope>NUCLEOTIDE SEQUENCE [LARGE SCALE GENOMIC DNA]</scope>
    <source>
        <strain>ATCC BAA-1160 / DSM 100696 / MI-1</strain>
    </source>
</reference>
<name>Y043_DESRM</name>
<keyword id="KW-0963">Cytoplasm</keyword>
<keyword id="KW-0238">DNA-binding</keyword>
<keyword id="KW-1185">Reference proteome</keyword>
<proteinExistence type="inferred from homology"/>